<proteinExistence type="inferred from homology"/>
<feature type="chain" id="PRO_1000001552" description="Recombination protein RecR">
    <location>
        <begin position="1"/>
        <end position="193"/>
    </location>
</feature>
<feature type="domain" description="Toprim" evidence="1">
    <location>
        <begin position="84"/>
        <end position="170"/>
    </location>
</feature>
<feature type="zinc finger region" description="C4-type" evidence="1">
    <location>
        <begin position="61"/>
        <end position="76"/>
    </location>
</feature>
<protein>
    <recommendedName>
        <fullName evidence="1">Recombination protein RecR</fullName>
    </recommendedName>
</protein>
<gene>
    <name evidence="1" type="primary">recR</name>
    <name type="ordered locus">HPAG1_0906</name>
</gene>
<name>RECR_HELPH</name>
<comment type="function">
    <text evidence="1">May play a role in DNA repair. It seems to be involved in an RecBC-independent recombinational process of DNA repair. It may act with RecF and RecO.</text>
</comment>
<comment type="similarity">
    <text evidence="1">Belongs to the RecR family.</text>
</comment>
<evidence type="ECO:0000255" key="1">
    <source>
        <dbReference type="HAMAP-Rule" id="MF_00017"/>
    </source>
</evidence>
<keyword id="KW-0227">DNA damage</keyword>
<keyword id="KW-0233">DNA recombination</keyword>
<keyword id="KW-0234">DNA repair</keyword>
<keyword id="KW-0479">Metal-binding</keyword>
<keyword id="KW-0862">Zinc</keyword>
<keyword id="KW-0863">Zinc-finger</keyword>
<accession>Q1CSU9</accession>
<organism>
    <name type="scientific">Helicobacter pylori (strain HPAG1)</name>
    <dbReference type="NCBI Taxonomy" id="357544"/>
    <lineage>
        <taxon>Bacteria</taxon>
        <taxon>Pseudomonadati</taxon>
        <taxon>Campylobacterota</taxon>
        <taxon>Epsilonproteobacteria</taxon>
        <taxon>Campylobacterales</taxon>
        <taxon>Helicobacteraceae</taxon>
        <taxon>Helicobacter</taxon>
    </lineage>
</organism>
<sequence length="193" mass="22004">MNTYKNSLNHFLNLVDCLEKIPNVGKKSAFKIAYHLGLENPYLALKITHALENALENLKTCTSCNALSESEVCEICSDESRQNSQLCMVLHPRDVFILEDLKDFLGRYYVLNSIEEVDFNALEKRLIEENIKEIIFAFPPTLANDSLMLYIEDKLQHFHLTFTKIAQGVPTGVNFENIDSVSLSRAFNSRIKA</sequence>
<dbReference type="EMBL" id="CP000241">
    <property type="protein sequence ID" value="ABF84973.1"/>
    <property type="molecule type" value="Genomic_DNA"/>
</dbReference>
<dbReference type="RefSeq" id="WP_001099584.1">
    <property type="nucleotide sequence ID" value="NC_008086.1"/>
</dbReference>
<dbReference type="SMR" id="Q1CSU9"/>
<dbReference type="KEGG" id="hpa:HPAG1_0906"/>
<dbReference type="HOGENOM" id="CLU_060739_1_1_7"/>
<dbReference type="GO" id="GO:0003677">
    <property type="term" value="F:DNA binding"/>
    <property type="evidence" value="ECO:0007669"/>
    <property type="project" value="UniProtKB-UniRule"/>
</dbReference>
<dbReference type="GO" id="GO:0008270">
    <property type="term" value="F:zinc ion binding"/>
    <property type="evidence" value="ECO:0007669"/>
    <property type="project" value="UniProtKB-KW"/>
</dbReference>
<dbReference type="GO" id="GO:0006310">
    <property type="term" value="P:DNA recombination"/>
    <property type="evidence" value="ECO:0007669"/>
    <property type="project" value="UniProtKB-UniRule"/>
</dbReference>
<dbReference type="GO" id="GO:0006281">
    <property type="term" value="P:DNA repair"/>
    <property type="evidence" value="ECO:0007669"/>
    <property type="project" value="UniProtKB-UniRule"/>
</dbReference>
<dbReference type="CDD" id="cd01025">
    <property type="entry name" value="TOPRIM_recR"/>
    <property type="match status" value="1"/>
</dbReference>
<dbReference type="Gene3D" id="3.40.1360.10">
    <property type="match status" value="1"/>
</dbReference>
<dbReference type="Gene3D" id="1.10.8.420">
    <property type="entry name" value="RecR Domain 1"/>
    <property type="match status" value="1"/>
</dbReference>
<dbReference type="HAMAP" id="MF_00017">
    <property type="entry name" value="RecR"/>
    <property type="match status" value="1"/>
</dbReference>
<dbReference type="InterPro" id="IPR000093">
    <property type="entry name" value="DNA_Rcmb_RecR"/>
</dbReference>
<dbReference type="InterPro" id="IPR023627">
    <property type="entry name" value="Rcmb_RecR"/>
</dbReference>
<dbReference type="InterPro" id="IPR015967">
    <property type="entry name" value="Rcmb_RecR_Znf"/>
</dbReference>
<dbReference type="InterPro" id="IPR006171">
    <property type="entry name" value="TOPRIM_dom"/>
</dbReference>
<dbReference type="InterPro" id="IPR034137">
    <property type="entry name" value="TOPRIM_RecR"/>
</dbReference>
<dbReference type="NCBIfam" id="TIGR00615">
    <property type="entry name" value="recR"/>
    <property type="match status" value="1"/>
</dbReference>
<dbReference type="PANTHER" id="PTHR30446">
    <property type="entry name" value="RECOMBINATION PROTEIN RECR"/>
    <property type="match status" value="1"/>
</dbReference>
<dbReference type="PANTHER" id="PTHR30446:SF0">
    <property type="entry name" value="RECOMBINATION PROTEIN RECR"/>
    <property type="match status" value="1"/>
</dbReference>
<dbReference type="Pfam" id="PF21176">
    <property type="entry name" value="RecR_HhH"/>
    <property type="match status" value="1"/>
</dbReference>
<dbReference type="Pfam" id="PF02132">
    <property type="entry name" value="RecR_ZnF"/>
    <property type="match status" value="1"/>
</dbReference>
<dbReference type="SUPFAM" id="SSF111304">
    <property type="entry name" value="Recombination protein RecR"/>
    <property type="match status" value="1"/>
</dbReference>
<dbReference type="PROSITE" id="PS01300">
    <property type="entry name" value="RECR"/>
    <property type="match status" value="1"/>
</dbReference>
<dbReference type="PROSITE" id="PS50880">
    <property type="entry name" value="TOPRIM"/>
    <property type="match status" value="1"/>
</dbReference>
<reference key="1">
    <citation type="journal article" date="2006" name="Proc. Natl. Acad. Sci. U.S.A.">
        <title>The complete genome sequence of a chronic atrophic gastritis Helicobacter pylori strain: evolution during disease progression.</title>
        <authorList>
            <person name="Oh J.D."/>
            <person name="Kling-Baeckhed H."/>
            <person name="Giannakis M."/>
            <person name="Xu J."/>
            <person name="Fulton R.S."/>
            <person name="Fulton L.A."/>
            <person name="Cordum H.S."/>
            <person name="Wang C."/>
            <person name="Elliott G."/>
            <person name="Edwards J."/>
            <person name="Mardis E.R."/>
            <person name="Engstrand L.G."/>
            <person name="Gordon J.I."/>
        </authorList>
    </citation>
    <scope>NUCLEOTIDE SEQUENCE [LARGE SCALE GENOMIC DNA]</scope>
    <source>
        <strain>HPAG1</strain>
    </source>
</reference>